<gene>
    <name evidence="1" type="primary">rimP</name>
    <name type="ordered locus">CC_0045</name>
</gene>
<accession>Q9AC22</accession>
<protein>
    <recommendedName>
        <fullName evidence="1">Ribosome maturation factor RimP</fullName>
    </recommendedName>
</protein>
<organism>
    <name type="scientific">Caulobacter vibrioides (strain ATCC 19089 / CIP 103742 / CB 15)</name>
    <name type="common">Caulobacter crescentus</name>
    <dbReference type="NCBI Taxonomy" id="190650"/>
    <lineage>
        <taxon>Bacteria</taxon>
        <taxon>Pseudomonadati</taxon>
        <taxon>Pseudomonadota</taxon>
        <taxon>Alphaproteobacteria</taxon>
        <taxon>Caulobacterales</taxon>
        <taxon>Caulobacteraceae</taxon>
        <taxon>Caulobacter</taxon>
    </lineage>
</organism>
<comment type="function">
    <text evidence="1">Required for maturation of 30S ribosomal subunits.</text>
</comment>
<comment type="subcellular location">
    <subcellularLocation>
        <location evidence="1">Cytoplasm</location>
    </subcellularLocation>
</comment>
<comment type="similarity">
    <text evidence="1">Belongs to the RimP family.</text>
</comment>
<comment type="sequence caution" evidence="2">
    <conflict type="erroneous initiation">
        <sequence resource="EMBL-CDS" id="AAK22033"/>
    </conflict>
</comment>
<name>RIMP_CAUVC</name>
<reference key="1">
    <citation type="journal article" date="2001" name="Proc. Natl. Acad. Sci. U.S.A.">
        <title>Complete genome sequence of Caulobacter crescentus.</title>
        <authorList>
            <person name="Nierman W.C."/>
            <person name="Feldblyum T.V."/>
            <person name="Laub M.T."/>
            <person name="Paulsen I.T."/>
            <person name="Nelson K.E."/>
            <person name="Eisen J.A."/>
            <person name="Heidelberg J.F."/>
            <person name="Alley M.R.K."/>
            <person name="Ohta N."/>
            <person name="Maddock J.R."/>
            <person name="Potocka I."/>
            <person name="Nelson W.C."/>
            <person name="Newton A."/>
            <person name="Stephens C."/>
            <person name="Phadke N.D."/>
            <person name="Ely B."/>
            <person name="DeBoy R.T."/>
            <person name="Dodson R.J."/>
            <person name="Durkin A.S."/>
            <person name="Gwinn M.L."/>
            <person name="Haft D.H."/>
            <person name="Kolonay J.F."/>
            <person name="Smit J."/>
            <person name="Craven M.B."/>
            <person name="Khouri H.M."/>
            <person name="Shetty J."/>
            <person name="Berry K.J."/>
            <person name="Utterback T.R."/>
            <person name="Tran K."/>
            <person name="Wolf A.M."/>
            <person name="Vamathevan J.J."/>
            <person name="Ermolaeva M.D."/>
            <person name="White O."/>
            <person name="Salzberg S.L."/>
            <person name="Venter J.C."/>
            <person name="Shapiro L."/>
            <person name="Fraser C.M."/>
        </authorList>
    </citation>
    <scope>NUCLEOTIDE SEQUENCE [LARGE SCALE GENOMIC DNA]</scope>
    <source>
        <strain>ATCC 19089 / CIP 103742 / CB 15</strain>
    </source>
</reference>
<proteinExistence type="inferred from homology"/>
<keyword id="KW-0963">Cytoplasm</keyword>
<keyword id="KW-1185">Reference proteome</keyword>
<keyword id="KW-0690">Ribosome biogenesis</keyword>
<feature type="chain" id="PRO_0000181857" description="Ribosome maturation factor RimP">
    <location>
        <begin position="1"/>
        <end position="178"/>
    </location>
</feature>
<sequence length="178" mass="19706">MLDPVAESLGYEIVRLRLMGGTEQRRLQIMAEHPLLEDGSGGDMNVEDCAKLSRAVSEVLDAADPIAGEYTLEVSSPGIDRPLTRLKDFDDYAGLEARIELDRVAEGRKRFKGELAGVEDDQVGLNIEGEDDVTVYFPFAWVIDAKLVMTDALMERGAKQRAARLESDNEDLSESEED</sequence>
<dbReference type="EMBL" id="AE005673">
    <property type="protein sequence ID" value="AAK22033.1"/>
    <property type="status" value="ALT_INIT"/>
    <property type="molecule type" value="Genomic_DNA"/>
</dbReference>
<dbReference type="PIR" id="E87254">
    <property type="entry name" value="E87254"/>
</dbReference>
<dbReference type="RefSeq" id="NP_418865.1">
    <property type="nucleotide sequence ID" value="NC_002696.2"/>
</dbReference>
<dbReference type="SMR" id="Q9AC22"/>
<dbReference type="STRING" id="190650.CC_0045"/>
<dbReference type="EnsemblBacteria" id="AAK22033">
    <property type="protein sequence ID" value="AAK22033"/>
    <property type="gene ID" value="CC_0045"/>
</dbReference>
<dbReference type="KEGG" id="ccr:CC_0045"/>
<dbReference type="PATRIC" id="fig|190650.5.peg.44"/>
<dbReference type="eggNOG" id="COG0779">
    <property type="taxonomic scope" value="Bacteria"/>
</dbReference>
<dbReference type="HOGENOM" id="CLU_070525_0_1_5"/>
<dbReference type="Proteomes" id="UP000001816">
    <property type="component" value="Chromosome"/>
</dbReference>
<dbReference type="GO" id="GO:0005829">
    <property type="term" value="C:cytosol"/>
    <property type="evidence" value="ECO:0007669"/>
    <property type="project" value="TreeGrafter"/>
</dbReference>
<dbReference type="GO" id="GO:0000028">
    <property type="term" value="P:ribosomal small subunit assembly"/>
    <property type="evidence" value="ECO:0007669"/>
    <property type="project" value="TreeGrafter"/>
</dbReference>
<dbReference type="GO" id="GO:0006412">
    <property type="term" value="P:translation"/>
    <property type="evidence" value="ECO:0007669"/>
    <property type="project" value="TreeGrafter"/>
</dbReference>
<dbReference type="CDD" id="cd01734">
    <property type="entry name" value="YlxS_C"/>
    <property type="match status" value="1"/>
</dbReference>
<dbReference type="Gene3D" id="2.30.30.180">
    <property type="entry name" value="Ribosome maturation factor RimP, C-terminal domain"/>
    <property type="match status" value="1"/>
</dbReference>
<dbReference type="Gene3D" id="3.30.300.70">
    <property type="entry name" value="RimP-like superfamily, N-terminal"/>
    <property type="match status" value="1"/>
</dbReference>
<dbReference type="HAMAP" id="MF_01077">
    <property type="entry name" value="RimP"/>
    <property type="match status" value="1"/>
</dbReference>
<dbReference type="InterPro" id="IPR003728">
    <property type="entry name" value="Ribosome_maturation_RimP"/>
</dbReference>
<dbReference type="InterPro" id="IPR028998">
    <property type="entry name" value="RimP_C"/>
</dbReference>
<dbReference type="InterPro" id="IPR036847">
    <property type="entry name" value="RimP_C_sf"/>
</dbReference>
<dbReference type="InterPro" id="IPR028989">
    <property type="entry name" value="RimP_N"/>
</dbReference>
<dbReference type="InterPro" id="IPR035956">
    <property type="entry name" value="RimP_N_sf"/>
</dbReference>
<dbReference type="NCBIfam" id="NF000932">
    <property type="entry name" value="PRK00092.2-5"/>
    <property type="match status" value="1"/>
</dbReference>
<dbReference type="PANTHER" id="PTHR33867">
    <property type="entry name" value="RIBOSOME MATURATION FACTOR RIMP"/>
    <property type="match status" value="1"/>
</dbReference>
<dbReference type="PANTHER" id="PTHR33867:SF1">
    <property type="entry name" value="RIBOSOME MATURATION FACTOR RIMP"/>
    <property type="match status" value="1"/>
</dbReference>
<dbReference type="Pfam" id="PF17384">
    <property type="entry name" value="DUF150_C"/>
    <property type="match status" value="1"/>
</dbReference>
<dbReference type="Pfam" id="PF02576">
    <property type="entry name" value="RimP_N"/>
    <property type="match status" value="1"/>
</dbReference>
<dbReference type="SUPFAM" id="SSF74942">
    <property type="entry name" value="YhbC-like, C-terminal domain"/>
    <property type="match status" value="1"/>
</dbReference>
<dbReference type="SUPFAM" id="SSF75420">
    <property type="entry name" value="YhbC-like, N-terminal domain"/>
    <property type="match status" value="1"/>
</dbReference>
<evidence type="ECO:0000255" key="1">
    <source>
        <dbReference type="HAMAP-Rule" id="MF_01077"/>
    </source>
</evidence>
<evidence type="ECO:0000305" key="2"/>